<proteinExistence type="inferred from homology"/>
<accession>B0JWU8</accession>
<evidence type="ECO:0000255" key="1">
    <source>
        <dbReference type="HAMAP-Rule" id="MF_01399"/>
    </source>
</evidence>
<keyword id="KW-0066">ATP synthesis</keyword>
<keyword id="KW-0138">CF(0)</keyword>
<keyword id="KW-0375">Hydrogen ion transport</keyword>
<keyword id="KW-0406">Ion transport</keyword>
<keyword id="KW-0472">Membrane</keyword>
<keyword id="KW-0793">Thylakoid</keyword>
<keyword id="KW-0812">Transmembrane</keyword>
<keyword id="KW-1133">Transmembrane helix</keyword>
<keyword id="KW-0813">Transport</keyword>
<reference key="1">
    <citation type="journal article" date="2007" name="DNA Res.">
        <title>Complete genomic structure of the bloom-forming toxic cyanobacterium Microcystis aeruginosa NIES-843.</title>
        <authorList>
            <person name="Kaneko T."/>
            <person name="Nakajima N."/>
            <person name="Okamoto S."/>
            <person name="Suzuki I."/>
            <person name="Tanabe Y."/>
            <person name="Tamaoki M."/>
            <person name="Nakamura Y."/>
            <person name="Kasai F."/>
            <person name="Watanabe A."/>
            <person name="Kawashima K."/>
            <person name="Kishida Y."/>
            <person name="Ono A."/>
            <person name="Shimizu Y."/>
            <person name="Takahashi C."/>
            <person name="Minami C."/>
            <person name="Fujishiro T."/>
            <person name="Kohara M."/>
            <person name="Katoh M."/>
            <person name="Nakazaki N."/>
            <person name="Nakayama S."/>
            <person name="Yamada M."/>
            <person name="Tabata S."/>
            <person name="Watanabe M.M."/>
        </authorList>
    </citation>
    <scope>NUCLEOTIDE SEQUENCE [LARGE SCALE GENOMIC DNA]</scope>
    <source>
        <strain>NIES-843 / IAM M-247</strain>
    </source>
</reference>
<name>ATPF2_MICAN</name>
<dbReference type="EMBL" id="AP009552">
    <property type="protein sequence ID" value="BAG04835.1"/>
    <property type="molecule type" value="Genomic_DNA"/>
</dbReference>
<dbReference type="RefSeq" id="WP_002795845.1">
    <property type="nucleotide sequence ID" value="NC_010296.1"/>
</dbReference>
<dbReference type="SMR" id="B0JWU8"/>
<dbReference type="STRING" id="449447.MAE_50130"/>
<dbReference type="PaxDb" id="449447-MAE_50130"/>
<dbReference type="EnsemblBacteria" id="BAG04835">
    <property type="protein sequence ID" value="BAG04835"/>
    <property type="gene ID" value="MAE_50130"/>
</dbReference>
<dbReference type="KEGG" id="mar:MAE_50130"/>
<dbReference type="eggNOG" id="COG0711">
    <property type="taxonomic scope" value="Bacteria"/>
</dbReference>
<dbReference type="HOGENOM" id="CLU_079215_9_0_3"/>
<dbReference type="BioCyc" id="MAER449447:MAE_RS21755-MONOMER"/>
<dbReference type="Proteomes" id="UP000001510">
    <property type="component" value="Chromosome"/>
</dbReference>
<dbReference type="GO" id="GO:0031676">
    <property type="term" value="C:plasma membrane-derived thylakoid membrane"/>
    <property type="evidence" value="ECO:0007669"/>
    <property type="project" value="UniProtKB-SubCell"/>
</dbReference>
<dbReference type="GO" id="GO:0045259">
    <property type="term" value="C:proton-transporting ATP synthase complex"/>
    <property type="evidence" value="ECO:0007669"/>
    <property type="project" value="UniProtKB-KW"/>
</dbReference>
<dbReference type="GO" id="GO:0046933">
    <property type="term" value="F:proton-transporting ATP synthase activity, rotational mechanism"/>
    <property type="evidence" value="ECO:0007669"/>
    <property type="project" value="UniProtKB-UniRule"/>
</dbReference>
<dbReference type="GO" id="GO:0046961">
    <property type="term" value="F:proton-transporting ATPase activity, rotational mechanism"/>
    <property type="evidence" value="ECO:0007669"/>
    <property type="project" value="TreeGrafter"/>
</dbReference>
<dbReference type="CDD" id="cd06503">
    <property type="entry name" value="ATP-synt_Fo_b"/>
    <property type="match status" value="1"/>
</dbReference>
<dbReference type="HAMAP" id="MF_01398">
    <property type="entry name" value="ATP_synth_b_bprime"/>
    <property type="match status" value="1"/>
</dbReference>
<dbReference type="HAMAP" id="MF_01399">
    <property type="entry name" value="ATP_synth_bprime"/>
    <property type="match status" value="1"/>
</dbReference>
<dbReference type="InterPro" id="IPR034679">
    <property type="entry name" value="ATP_synth_b"/>
</dbReference>
<dbReference type="InterPro" id="IPR002146">
    <property type="entry name" value="ATP_synth_b/b'su_bac/chlpt"/>
</dbReference>
<dbReference type="InterPro" id="IPR050059">
    <property type="entry name" value="ATP_synthase_B_chain"/>
</dbReference>
<dbReference type="NCBIfam" id="NF005607">
    <property type="entry name" value="PRK07353.1"/>
    <property type="match status" value="1"/>
</dbReference>
<dbReference type="PANTHER" id="PTHR33445">
    <property type="entry name" value="ATP SYNTHASE SUBUNIT B', CHLOROPLASTIC"/>
    <property type="match status" value="1"/>
</dbReference>
<dbReference type="PANTHER" id="PTHR33445:SF2">
    <property type="entry name" value="ATP SYNTHASE SUBUNIT B', CHLOROPLASTIC"/>
    <property type="match status" value="1"/>
</dbReference>
<dbReference type="Pfam" id="PF00430">
    <property type="entry name" value="ATP-synt_B"/>
    <property type="match status" value="1"/>
</dbReference>
<feature type="chain" id="PRO_0000369015" description="ATP synthase subunit b'">
    <location>
        <begin position="1"/>
        <end position="143"/>
    </location>
</feature>
<feature type="transmembrane region" description="Helical" evidence="1">
    <location>
        <begin position="6"/>
        <end position="26"/>
    </location>
</feature>
<comment type="function">
    <text evidence="1">F(1)F(0) ATP synthase produces ATP from ADP in the presence of a proton or sodium gradient. F-type ATPases consist of two structural domains, F(1) containing the extramembraneous catalytic core and F(0) containing the membrane proton channel, linked together by a central stalk and a peripheral stalk. During catalysis, ATP synthesis in the catalytic domain of F(1) is coupled via a rotary mechanism of the central stalk subunits to proton translocation.</text>
</comment>
<comment type="function">
    <text evidence="1">Component of the F(0) channel, it forms part of the peripheral stalk, linking F(1) to F(0). The b'-subunit is a diverged and duplicated form of b found in plants and photosynthetic bacteria.</text>
</comment>
<comment type="subunit">
    <text evidence="1">F-type ATPases have 2 components, F(1) - the catalytic core - and F(0) - the membrane proton channel. F(1) has five subunits: alpha(3), beta(3), gamma(1), delta(1), epsilon(1). F(0) has four main subunits: a(1), b(1), b'(1) and c(10-14). The alpha and beta chains form an alternating ring which encloses part of the gamma chain. F(1) is attached to F(0) by a central stalk formed by the gamma and epsilon chains, while a peripheral stalk is formed by the delta, b and b' chains.</text>
</comment>
<comment type="subcellular location">
    <subcellularLocation>
        <location evidence="1">Cellular thylakoid membrane</location>
        <topology evidence="1">Single-pass membrane protein</topology>
    </subcellularLocation>
</comment>
<comment type="similarity">
    <text evidence="1">Belongs to the ATPase B chain family.</text>
</comment>
<gene>
    <name evidence="1" type="primary">atpF2</name>
    <name evidence="1" type="synonym">atpG</name>
    <name type="ordered locus">MAE_50130</name>
</gene>
<organism>
    <name type="scientific">Microcystis aeruginosa (strain NIES-843 / IAM M-2473)</name>
    <dbReference type="NCBI Taxonomy" id="449447"/>
    <lineage>
        <taxon>Bacteria</taxon>
        <taxon>Bacillati</taxon>
        <taxon>Cyanobacteriota</taxon>
        <taxon>Cyanophyceae</taxon>
        <taxon>Oscillatoriophycideae</taxon>
        <taxon>Chroococcales</taxon>
        <taxon>Microcystaceae</taxon>
        <taxon>Microcystis</taxon>
    </lineage>
</organism>
<protein>
    <recommendedName>
        <fullName evidence="1">ATP synthase subunit b'</fullName>
    </recommendedName>
    <alternativeName>
        <fullName evidence="1">ATP synthase F(0) sector subunit b'</fullName>
    </alternativeName>
    <alternativeName>
        <fullName evidence="1">ATPase subunit II</fullName>
    </alternativeName>
    <alternativeName>
        <fullName evidence="1">F-type ATPase subunit b'</fullName>
        <shortName evidence="1">F-ATPase subunit b'</shortName>
    </alternativeName>
</protein>
<sequence length="143" mass="15903">MFDFDATLPVMALQFILLAVILNAVFYKPLSKVLDERAEYIRQTESGAKEQLAKTEALVQEYELQLSSARKQSQEIIAQAQAEAQKLASERVAAAQKEAIARKEAVAAEIAQQKEEAFRSLEGQVASLSRQILEKLLGPELVR</sequence>